<name>RRF2M_SCHPO</name>
<evidence type="ECO:0000255" key="1">
    <source>
        <dbReference type="HAMAP-Rule" id="MF_03059"/>
    </source>
</evidence>
<dbReference type="EMBL" id="CU329671">
    <property type="protein sequence ID" value="CAA22530.1"/>
    <property type="molecule type" value="Genomic_DNA"/>
</dbReference>
<dbReference type="PIR" id="T40622">
    <property type="entry name" value="T40622"/>
</dbReference>
<dbReference type="RefSeq" id="NP_595089.1">
    <property type="nucleotide sequence ID" value="NM_001020996.1"/>
</dbReference>
<dbReference type="SMR" id="O94429"/>
<dbReference type="BioGRID" id="277623">
    <property type="interactions" value="1"/>
</dbReference>
<dbReference type="FunCoup" id="O94429">
    <property type="interactions" value="83"/>
</dbReference>
<dbReference type="STRING" id="284812.O94429"/>
<dbReference type="PaxDb" id="4896-SPBC660.10.1"/>
<dbReference type="EnsemblFungi" id="SPBC660.10.1">
    <property type="protein sequence ID" value="SPBC660.10.1:pep"/>
    <property type="gene ID" value="SPBC660.10"/>
</dbReference>
<dbReference type="GeneID" id="2541108"/>
<dbReference type="KEGG" id="spo:2541108"/>
<dbReference type="PomBase" id="SPBC660.10">
    <property type="gene designation" value="mef2"/>
</dbReference>
<dbReference type="VEuPathDB" id="FungiDB:SPBC660.10"/>
<dbReference type="eggNOG" id="KOG0465">
    <property type="taxonomic scope" value="Eukaryota"/>
</dbReference>
<dbReference type="HOGENOM" id="CLU_002794_4_1_1"/>
<dbReference type="InParanoid" id="O94429"/>
<dbReference type="OMA" id="GPQFTFP"/>
<dbReference type="PhylomeDB" id="O94429"/>
<dbReference type="PRO" id="PR:O94429"/>
<dbReference type="Proteomes" id="UP000002485">
    <property type="component" value="Chromosome II"/>
</dbReference>
<dbReference type="GO" id="GO:0005759">
    <property type="term" value="C:mitochondrial matrix"/>
    <property type="evidence" value="ECO:0000305"/>
    <property type="project" value="PomBase"/>
</dbReference>
<dbReference type="GO" id="GO:0005739">
    <property type="term" value="C:mitochondrion"/>
    <property type="evidence" value="ECO:0007005"/>
    <property type="project" value="PomBase"/>
</dbReference>
<dbReference type="GO" id="GO:0005525">
    <property type="term" value="F:GTP binding"/>
    <property type="evidence" value="ECO:0000255"/>
    <property type="project" value="PomBase"/>
</dbReference>
<dbReference type="GO" id="GO:0003924">
    <property type="term" value="F:GTPase activity"/>
    <property type="evidence" value="ECO:0000318"/>
    <property type="project" value="GO_Central"/>
</dbReference>
<dbReference type="GO" id="GO:0032543">
    <property type="term" value="P:mitochondrial translation"/>
    <property type="evidence" value="ECO:0000318"/>
    <property type="project" value="GO_Central"/>
</dbReference>
<dbReference type="GO" id="GO:0070126">
    <property type="term" value="P:mitochondrial translational termination"/>
    <property type="evidence" value="ECO:0000266"/>
    <property type="project" value="PomBase"/>
</dbReference>
<dbReference type="GO" id="GO:0032790">
    <property type="term" value="P:ribosome disassembly"/>
    <property type="evidence" value="ECO:0000318"/>
    <property type="project" value="GO_Central"/>
</dbReference>
<dbReference type="CDD" id="cd01886">
    <property type="entry name" value="EF-G"/>
    <property type="match status" value="1"/>
</dbReference>
<dbReference type="CDD" id="cd16262">
    <property type="entry name" value="EFG_III"/>
    <property type="match status" value="1"/>
</dbReference>
<dbReference type="CDD" id="cd04092">
    <property type="entry name" value="mtEFG2_II_like"/>
    <property type="match status" value="1"/>
</dbReference>
<dbReference type="FunFam" id="3.40.50.300:FF:000514">
    <property type="entry name" value="Ribosome-releasing factor 2, mitochondrial"/>
    <property type="match status" value="1"/>
</dbReference>
<dbReference type="Gene3D" id="3.30.70.240">
    <property type="match status" value="1"/>
</dbReference>
<dbReference type="Gene3D" id="3.30.70.870">
    <property type="entry name" value="Elongation Factor G (Translational Gtpase), domain 3"/>
    <property type="match status" value="1"/>
</dbReference>
<dbReference type="Gene3D" id="3.40.50.300">
    <property type="entry name" value="P-loop containing nucleotide triphosphate hydrolases"/>
    <property type="match status" value="1"/>
</dbReference>
<dbReference type="Gene3D" id="2.40.30.10">
    <property type="entry name" value="Translation factors"/>
    <property type="match status" value="1"/>
</dbReference>
<dbReference type="HAMAP" id="MF_03059">
    <property type="entry name" value="mEF_G_2"/>
    <property type="match status" value="1"/>
</dbReference>
<dbReference type="InterPro" id="IPR053905">
    <property type="entry name" value="EF-G-like_DII"/>
</dbReference>
<dbReference type="InterPro" id="IPR030851">
    <property type="entry name" value="EFG2"/>
</dbReference>
<dbReference type="InterPro" id="IPR041095">
    <property type="entry name" value="EFG_II"/>
</dbReference>
<dbReference type="InterPro" id="IPR009022">
    <property type="entry name" value="EFG_III"/>
</dbReference>
<dbReference type="InterPro" id="IPR035647">
    <property type="entry name" value="EFG_III/V"/>
</dbReference>
<dbReference type="InterPro" id="IPR000640">
    <property type="entry name" value="EFG_V-like"/>
</dbReference>
<dbReference type="InterPro" id="IPR031157">
    <property type="entry name" value="G_TR_CS"/>
</dbReference>
<dbReference type="InterPro" id="IPR027417">
    <property type="entry name" value="P-loop_NTPase"/>
</dbReference>
<dbReference type="InterPro" id="IPR005225">
    <property type="entry name" value="Small_GTP-bd"/>
</dbReference>
<dbReference type="InterPro" id="IPR000795">
    <property type="entry name" value="T_Tr_GTP-bd_dom"/>
</dbReference>
<dbReference type="InterPro" id="IPR009000">
    <property type="entry name" value="Transl_B-barrel_sf"/>
</dbReference>
<dbReference type="NCBIfam" id="TIGR00231">
    <property type="entry name" value="small_GTP"/>
    <property type="match status" value="1"/>
</dbReference>
<dbReference type="PANTHER" id="PTHR43261:SF1">
    <property type="entry name" value="RIBOSOME-RELEASING FACTOR 2, MITOCHONDRIAL"/>
    <property type="match status" value="1"/>
</dbReference>
<dbReference type="PANTHER" id="PTHR43261">
    <property type="entry name" value="TRANSLATION ELONGATION FACTOR G-RELATED"/>
    <property type="match status" value="1"/>
</dbReference>
<dbReference type="Pfam" id="PF22042">
    <property type="entry name" value="EF-G_D2"/>
    <property type="match status" value="1"/>
</dbReference>
<dbReference type="Pfam" id="PF00679">
    <property type="entry name" value="EFG_C"/>
    <property type="match status" value="1"/>
</dbReference>
<dbReference type="Pfam" id="PF14492">
    <property type="entry name" value="EFG_III"/>
    <property type="match status" value="1"/>
</dbReference>
<dbReference type="Pfam" id="PF00009">
    <property type="entry name" value="GTP_EFTU"/>
    <property type="match status" value="1"/>
</dbReference>
<dbReference type="PRINTS" id="PR00315">
    <property type="entry name" value="ELONGATNFCT"/>
</dbReference>
<dbReference type="SMART" id="SM00838">
    <property type="entry name" value="EFG_C"/>
    <property type="match status" value="1"/>
</dbReference>
<dbReference type="SUPFAM" id="SSF54980">
    <property type="entry name" value="EF-G C-terminal domain-like"/>
    <property type="match status" value="2"/>
</dbReference>
<dbReference type="SUPFAM" id="SSF52540">
    <property type="entry name" value="P-loop containing nucleoside triphosphate hydrolases"/>
    <property type="match status" value="1"/>
</dbReference>
<dbReference type="SUPFAM" id="SSF50447">
    <property type="entry name" value="Translation proteins"/>
    <property type="match status" value="1"/>
</dbReference>
<dbReference type="PROSITE" id="PS00301">
    <property type="entry name" value="G_TR_1"/>
    <property type="match status" value="1"/>
</dbReference>
<dbReference type="PROSITE" id="PS51722">
    <property type="entry name" value="G_TR_2"/>
    <property type="match status" value="1"/>
</dbReference>
<gene>
    <name type="primary">mef2</name>
    <name type="ORF">SPBC660.10</name>
</gene>
<protein>
    <recommendedName>
        <fullName evidence="1">Ribosome-releasing factor 2, mitochondrial</fullName>
        <shortName evidence="1">RRF2mt</shortName>
    </recommendedName>
    <alternativeName>
        <fullName evidence="1">Elongation factor G 2, mitochondrial</fullName>
        <shortName evidence="1">EF-G2mt</shortName>
        <shortName evidence="1">mEF-G 2</shortName>
    </alternativeName>
</protein>
<sequence length="813" mass="90853">MLRIVWKPLKIRLPVWRRYQSNISINSIRNVGIIAHIDAGKTTLTEKMLYYGGFTSHFGNVDTGDTVMDYLPAERQRGITINSAAISFTWRNQRINLIDTPGHADFTFEVERSVAVLDGAVAIIDGSAGVEAQTKVVWKQATKRGIPKVIFVNKMDRVGSSLGSTIRSIYTNLDCPYPLVLQLPVYSDGLQERKFLGILDILQQKMILWDTSDNKLGTDGTHVQELPIPESHMERFIEARNALVMSLCDVDETLCDEYLENEDSLAFTNDRLFKIIKQKTISGNVVPVLCGSSLKNIAVQPIMDAIIDYLPSPVEFYEKNASKETSSDKIISLDKRPLLAKIFKVIHHASRGILTYVRVNEGTLSRGMMMFNPRTKKSERAIRLYNVFADQTQEVDCISAGNIGVISGIKQFHTGDIIINKENSKNFHEYLSGNQSVISIPEPVCIASIEPYSLKDEPALLEALANMNREDPSFRYTQDLENGQLLIQGMGIMHLQVSYERLVSEFGARASLGKVQVGYRETLIDVSFNSVTLSTENKENLIINVYLIPISDEGDETLKKYFSEGEIQKVRSKGQEDGVLFYGWKPENSCTLPDHLSFQRIQENIYFGIVAGLSHGPLHGFPLTNLQSFCTISSFLSNDFPLSLLTQASMKATKNAVFSLYKRSPKSFRILEPYMDVTITTPEEYVGIVSKDLVGKRGATIKEITEIGKNAASKDSQIAIGILGERYLPADEPSSVKANNASSLLQSSSVIKCIRAQVPLEQILDYNSVISSLTKGNAKFLMSHPMESQTPKLVNYGSSFHPMSMQRQKRIFP</sequence>
<feature type="transit peptide" description="Mitochondrion" evidence="1">
    <location>
        <begin position="1"/>
        <end position="20"/>
    </location>
</feature>
<feature type="chain" id="PRO_0000007452" description="Ribosome-releasing factor 2, mitochondrial">
    <location>
        <begin position="21"/>
        <end position="813"/>
    </location>
</feature>
<feature type="domain" description="tr-type G">
    <location>
        <begin position="26"/>
        <end position="314"/>
    </location>
</feature>
<feature type="binding site" evidence="1">
    <location>
        <begin position="35"/>
        <end position="42"/>
    </location>
    <ligand>
        <name>GTP</name>
        <dbReference type="ChEBI" id="CHEBI:37565"/>
    </ligand>
</feature>
<feature type="binding site" evidence="1">
    <location>
        <begin position="99"/>
        <end position="103"/>
    </location>
    <ligand>
        <name>GTP</name>
        <dbReference type="ChEBI" id="CHEBI:37565"/>
    </ligand>
</feature>
<feature type="binding site" evidence="1">
    <location>
        <begin position="153"/>
        <end position="156"/>
    </location>
    <ligand>
        <name>GTP</name>
        <dbReference type="ChEBI" id="CHEBI:37565"/>
    </ligand>
</feature>
<keyword id="KW-0342">GTP-binding</keyword>
<keyword id="KW-0496">Mitochondrion</keyword>
<keyword id="KW-0547">Nucleotide-binding</keyword>
<keyword id="KW-0648">Protein biosynthesis</keyword>
<keyword id="KW-1185">Reference proteome</keyword>
<keyword id="KW-0809">Transit peptide</keyword>
<accession>O94429</accession>
<proteinExistence type="inferred from homology"/>
<organism>
    <name type="scientific">Schizosaccharomyces pombe (strain 972 / ATCC 24843)</name>
    <name type="common">Fission yeast</name>
    <dbReference type="NCBI Taxonomy" id="284812"/>
    <lineage>
        <taxon>Eukaryota</taxon>
        <taxon>Fungi</taxon>
        <taxon>Dikarya</taxon>
        <taxon>Ascomycota</taxon>
        <taxon>Taphrinomycotina</taxon>
        <taxon>Schizosaccharomycetes</taxon>
        <taxon>Schizosaccharomycetales</taxon>
        <taxon>Schizosaccharomycetaceae</taxon>
        <taxon>Schizosaccharomyces</taxon>
    </lineage>
</organism>
<reference key="1">
    <citation type="journal article" date="2002" name="Nature">
        <title>The genome sequence of Schizosaccharomyces pombe.</title>
        <authorList>
            <person name="Wood V."/>
            <person name="Gwilliam R."/>
            <person name="Rajandream M.A."/>
            <person name="Lyne M.H."/>
            <person name="Lyne R."/>
            <person name="Stewart A."/>
            <person name="Sgouros J.G."/>
            <person name="Peat N."/>
            <person name="Hayles J."/>
            <person name="Baker S.G."/>
            <person name="Basham D."/>
            <person name="Bowman S."/>
            <person name="Brooks K."/>
            <person name="Brown D."/>
            <person name="Brown S."/>
            <person name="Chillingworth T."/>
            <person name="Churcher C.M."/>
            <person name="Collins M."/>
            <person name="Connor R."/>
            <person name="Cronin A."/>
            <person name="Davis P."/>
            <person name="Feltwell T."/>
            <person name="Fraser A."/>
            <person name="Gentles S."/>
            <person name="Goble A."/>
            <person name="Hamlin N."/>
            <person name="Harris D.E."/>
            <person name="Hidalgo J."/>
            <person name="Hodgson G."/>
            <person name="Holroyd S."/>
            <person name="Hornsby T."/>
            <person name="Howarth S."/>
            <person name="Huckle E.J."/>
            <person name="Hunt S."/>
            <person name="Jagels K."/>
            <person name="James K.D."/>
            <person name="Jones L."/>
            <person name="Jones M."/>
            <person name="Leather S."/>
            <person name="McDonald S."/>
            <person name="McLean J."/>
            <person name="Mooney P."/>
            <person name="Moule S."/>
            <person name="Mungall K.L."/>
            <person name="Murphy L.D."/>
            <person name="Niblett D."/>
            <person name="Odell C."/>
            <person name="Oliver K."/>
            <person name="O'Neil S."/>
            <person name="Pearson D."/>
            <person name="Quail M.A."/>
            <person name="Rabbinowitsch E."/>
            <person name="Rutherford K.M."/>
            <person name="Rutter S."/>
            <person name="Saunders D."/>
            <person name="Seeger K."/>
            <person name="Sharp S."/>
            <person name="Skelton J."/>
            <person name="Simmonds M.N."/>
            <person name="Squares R."/>
            <person name="Squares S."/>
            <person name="Stevens K."/>
            <person name="Taylor K."/>
            <person name="Taylor R.G."/>
            <person name="Tivey A."/>
            <person name="Walsh S.V."/>
            <person name="Warren T."/>
            <person name="Whitehead S."/>
            <person name="Woodward J.R."/>
            <person name="Volckaert G."/>
            <person name="Aert R."/>
            <person name="Robben J."/>
            <person name="Grymonprez B."/>
            <person name="Weltjens I."/>
            <person name="Vanstreels E."/>
            <person name="Rieger M."/>
            <person name="Schaefer M."/>
            <person name="Mueller-Auer S."/>
            <person name="Gabel C."/>
            <person name="Fuchs M."/>
            <person name="Duesterhoeft A."/>
            <person name="Fritzc C."/>
            <person name="Holzer E."/>
            <person name="Moestl D."/>
            <person name="Hilbert H."/>
            <person name="Borzym K."/>
            <person name="Langer I."/>
            <person name="Beck A."/>
            <person name="Lehrach H."/>
            <person name="Reinhardt R."/>
            <person name="Pohl T.M."/>
            <person name="Eger P."/>
            <person name="Zimmermann W."/>
            <person name="Wedler H."/>
            <person name="Wambutt R."/>
            <person name="Purnelle B."/>
            <person name="Goffeau A."/>
            <person name="Cadieu E."/>
            <person name="Dreano S."/>
            <person name="Gloux S."/>
            <person name="Lelaure V."/>
            <person name="Mottier S."/>
            <person name="Galibert F."/>
            <person name="Aves S.J."/>
            <person name="Xiang Z."/>
            <person name="Hunt C."/>
            <person name="Moore K."/>
            <person name="Hurst S.M."/>
            <person name="Lucas M."/>
            <person name="Rochet M."/>
            <person name="Gaillardin C."/>
            <person name="Tallada V.A."/>
            <person name="Garzon A."/>
            <person name="Thode G."/>
            <person name="Daga R.R."/>
            <person name="Cruzado L."/>
            <person name="Jimenez J."/>
            <person name="Sanchez M."/>
            <person name="del Rey F."/>
            <person name="Benito J."/>
            <person name="Dominguez A."/>
            <person name="Revuelta J.L."/>
            <person name="Moreno S."/>
            <person name="Armstrong J."/>
            <person name="Forsburg S.L."/>
            <person name="Cerutti L."/>
            <person name="Lowe T."/>
            <person name="McCombie W.R."/>
            <person name="Paulsen I."/>
            <person name="Potashkin J."/>
            <person name="Shpakovski G.V."/>
            <person name="Ussery D."/>
            <person name="Barrell B.G."/>
            <person name="Nurse P."/>
        </authorList>
    </citation>
    <scope>NUCLEOTIDE SEQUENCE [LARGE SCALE GENOMIC DNA]</scope>
    <source>
        <strain>972 / ATCC 24843</strain>
    </source>
</reference>
<comment type="function">
    <text evidence="1">Mitochondrial GTPase that mediates the disassembly of ribosomes from messenger RNA at the termination of mitochondrial protein biosynthesis. Not involved in the GTP-dependent ribosomal translocation step during translation elongation.</text>
</comment>
<comment type="subcellular location">
    <subcellularLocation>
        <location evidence="1">Mitochondrion</location>
    </subcellularLocation>
</comment>
<comment type="similarity">
    <text evidence="1">Belongs to the TRAFAC class translation factor GTPase superfamily. Classic translation factor GTPase family. EF-G/EF-2 subfamily.</text>
</comment>